<gene>
    <name type="primary">ACT3</name>
    <name type="ordered locus">At3g53750</name>
    <name type="ORF">F5K20_50</name>
</gene>
<dbReference type="EC" id="3.6.4.-" evidence="1"/>
<dbReference type="EMBL" id="U39480">
    <property type="status" value="NOT_ANNOTATED_CDS"/>
    <property type="molecule type" value="Genomic_DNA"/>
</dbReference>
<dbReference type="EMBL" id="AL132960">
    <property type="protein sequence ID" value="CAB88337.1"/>
    <property type="status" value="ALT_SEQ"/>
    <property type="molecule type" value="Genomic_DNA"/>
</dbReference>
<dbReference type="EMBL" id="CP002686">
    <property type="protein sequence ID" value="AEE79138.1"/>
    <property type="molecule type" value="Genomic_DNA"/>
</dbReference>
<dbReference type="EMBL" id="CP002686">
    <property type="protein sequence ID" value="ANM64878.1"/>
    <property type="molecule type" value="Genomic_DNA"/>
</dbReference>
<dbReference type="EMBL" id="AY049293">
    <property type="protein sequence ID" value="AAK83635.1"/>
    <property type="molecule type" value="mRNA"/>
</dbReference>
<dbReference type="EMBL" id="BT002257">
    <property type="protein sequence ID" value="AAN72268.1"/>
    <property type="molecule type" value="mRNA"/>
</dbReference>
<dbReference type="EMBL" id="AY086557">
    <property type="protein sequence ID" value="AAM63620.1"/>
    <property type="molecule type" value="mRNA"/>
</dbReference>
<dbReference type="PIR" id="S68112">
    <property type="entry name" value="S68112"/>
</dbReference>
<dbReference type="RefSeq" id="NP_001326881.1">
    <property type="nucleotide sequence ID" value="NM_001339629.1"/>
</dbReference>
<dbReference type="RefSeq" id="NP_566988.1">
    <property type="nucleotide sequence ID" value="NM_115235.4"/>
</dbReference>
<dbReference type="SMR" id="P0CJ47"/>
<dbReference type="BioGRID" id="3683">
    <property type="interactions" value="8"/>
</dbReference>
<dbReference type="BioGRID" id="9859">
    <property type="interactions" value="2"/>
</dbReference>
<dbReference type="FunCoup" id="P0CJ47">
    <property type="interactions" value="1797"/>
</dbReference>
<dbReference type="IntAct" id="P0CJ47">
    <property type="interactions" value="3"/>
</dbReference>
<dbReference type="STRING" id="3702.P0CJ47"/>
<dbReference type="EnsemblPlants" id="AT2G37620.1">
    <property type="protein sequence ID" value="AT2G37620.1"/>
    <property type="gene ID" value="AT2G37620"/>
</dbReference>
<dbReference type="EnsemblPlants" id="AT2G37620.2">
    <property type="protein sequence ID" value="AT2G37620.2"/>
    <property type="gene ID" value="AT2G37620"/>
</dbReference>
<dbReference type="EnsemblPlants" id="AT2G37620.3">
    <property type="protein sequence ID" value="AT2G37620.3"/>
    <property type="gene ID" value="AT2G37620"/>
</dbReference>
<dbReference type="EnsemblPlants" id="AT2G37620.4">
    <property type="protein sequence ID" value="AT2G37620.4"/>
    <property type="gene ID" value="AT2G37620"/>
</dbReference>
<dbReference type="EnsemblPlants" id="AT3G53750.1">
    <property type="protein sequence ID" value="AT3G53750.1"/>
    <property type="gene ID" value="AT3G53750"/>
</dbReference>
<dbReference type="EnsemblPlants" id="AT3G53750.2">
    <property type="protein sequence ID" value="AT3G53750.2"/>
    <property type="gene ID" value="AT3G53750"/>
</dbReference>
<dbReference type="GeneID" id="824542"/>
<dbReference type="Gramene" id="AT2G37620.1">
    <property type="protein sequence ID" value="AT2G37620.1"/>
    <property type="gene ID" value="AT2G37620"/>
</dbReference>
<dbReference type="Gramene" id="AT2G37620.2">
    <property type="protein sequence ID" value="AT2G37620.2"/>
    <property type="gene ID" value="AT2G37620"/>
</dbReference>
<dbReference type="Gramene" id="AT2G37620.3">
    <property type="protein sequence ID" value="AT2G37620.3"/>
    <property type="gene ID" value="AT2G37620"/>
</dbReference>
<dbReference type="Gramene" id="AT2G37620.4">
    <property type="protein sequence ID" value="AT2G37620.4"/>
    <property type="gene ID" value="AT2G37620"/>
</dbReference>
<dbReference type="Gramene" id="AT3G53750.1">
    <property type="protein sequence ID" value="AT3G53750.1"/>
    <property type="gene ID" value="AT3G53750"/>
</dbReference>
<dbReference type="Gramene" id="AT3G53750.2">
    <property type="protein sequence ID" value="AT3G53750.2"/>
    <property type="gene ID" value="AT3G53750"/>
</dbReference>
<dbReference type="KEGG" id="ath:AT2G37620"/>
<dbReference type="KEGG" id="ath:AT3G53750"/>
<dbReference type="Araport" id="AT3G53750"/>
<dbReference type="TAIR" id="AT3G53750">
    <property type="gene designation" value="ACT3"/>
</dbReference>
<dbReference type="HOGENOM" id="CLU_027965_0_2_1"/>
<dbReference type="InParanoid" id="P0CJ47"/>
<dbReference type="OMA" id="CPENAGI"/>
<dbReference type="OrthoDB" id="1025403at2759"/>
<dbReference type="PhylomeDB" id="P0CJ47"/>
<dbReference type="CD-CODE" id="4299E36E">
    <property type="entry name" value="Nucleolus"/>
</dbReference>
<dbReference type="PRO" id="PR:P0CJ47"/>
<dbReference type="Proteomes" id="UP000006548">
    <property type="component" value="Chromosome 3"/>
</dbReference>
<dbReference type="ExpressionAtlas" id="P0CJ47">
    <property type="expression patterns" value="baseline and differential"/>
</dbReference>
<dbReference type="GO" id="GO:0005856">
    <property type="term" value="C:cytoskeleton"/>
    <property type="evidence" value="ECO:0007669"/>
    <property type="project" value="UniProtKB-SubCell"/>
</dbReference>
<dbReference type="GO" id="GO:0005829">
    <property type="term" value="C:cytosol"/>
    <property type="evidence" value="ECO:0007005"/>
    <property type="project" value="TAIR"/>
</dbReference>
<dbReference type="GO" id="GO:0005634">
    <property type="term" value="C:nucleus"/>
    <property type="evidence" value="ECO:0007005"/>
    <property type="project" value="TAIR"/>
</dbReference>
<dbReference type="GO" id="GO:0009505">
    <property type="term" value="C:plant-type cell wall"/>
    <property type="evidence" value="ECO:0007005"/>
    <property type="project" value="TAIR"/>
</dbReference>
<dbReference type="GO" id="GO:0009506">
    <property type="term" value="C:plasmodesma"/>
    <property type="evidence" value="ECO:0007005"/>
    <property type="project" value="TAIR"/>
</dbReference>
<dbReference type="GO" id="GO:0005524">
    <property type="term" value="F:ATP binding"/>
    <property type="evidence" value="ECO:0007669"/>
    <property type="project" value="UniProtKB-KW"/>
</dbReference>
<dbReference type="GO" id="GO:0016787">
    <property type="term" value="F:hydrolase activity"/>
    <property type="evidence" value="ECO:0007669"/>
    <property type="project" value="UniProtKB-KW"/>
</dbReference>
<dbReference type="GO" id="GO:0005200">
    <property type="term" value="F:structural constituent of cytoskeleton"/>
    <property type="evidence" value="ECO:0000250"/>
    <property type="project" value="TAIR"/>
</dbReference>
<dbReference type="CDD" id="cd10224">
    <property type="entry name" value="ASKHA_NBD_actin"/>
    <property type="match status" value="1"/>
</dbReference>
<dbReference type="FunFam" id="3.30.420.40:FF:000291">
    <property type="entry name" value="Actin, alpha skeletal muscle"/>
    <property type="match status" value="1"/>
</dbReference>
<dbReference type="FunFam" id="3.90.640.10:FF:000001">
    <property type="entry name" value="Actin, muscle"/>
    <property type="match status" value="1"/>
</dbReference>
<dbReference type="FunFam" id="3.30.420.40:FF:000404">
    <property type="entry name" value="Major actin"/>
    <property type="match status" value="1"/>
</dbReference>
<dbReference type="FunFam" id="3.30.420.40:FF:000058">
    <property type="entry name" value="Putative actin-related protein 5"/>
    <property type="match status" value="1"/>
</dbReference>
<dbReference type="Gene3D" id="3.30.420.40">
    <property type="match status" value="2"/>
</dbReference>
<dbReference type="Gene3D" id="3.90.640.10">
    <property type="entry name" value="Actin, Chain A, domain 4"/>
    <property type="match status" value="1"/>
</dbReference>
<dbReference type="InterPro" id="IPR004000">
    <property type="entry name" value="Actin"/>
</dbReference>
<dbReference type="InterPro" id="IPR020902">
    <property type="entry name" value="Actin/actin-like_CS"/>
</dbReference>
<dbReference type="InterPro" id="IPR004001">
    <property type="entry name" value="Actin_CS"/>
</dbReference>
<dbReference type="InterPro" id="IPR043129">
    <property type="entry name" value="ATPase_NBD"/>
</dbReference>
<dbReference type="PANTHER" id="PTHR11937">
    <property type="entry name" value="ACTIN"/>
    <property type="match status" value="1"/>
</dbReference>
<dbReference type="Pfam" id="PF00022">
    <property type="entry name" value="Actin"/>
    <property type="match status" value="1"/>
</dbReference>
<dbReference type="PRINTS" id="PR00190">
    <property type="entry name" value="ACTIN"/>
</dbReference>
<dbReference type="SMART" id="SM00268">
    <property type="entry name" value="ACTIN"/>
    <property type="match status" value="1"/>
</dbReference>
<dbReference type="SUPFAM" id="SSF53067">
    <property type="entry name" value="Actin-like ATPase domain"/>
    <property type="match status" value="2"/>
</dbReference>
<dbReference type="PROSITE" id="PS00406">
    <property type="entry name" value="ACTINS_1"/>
    <property type="match status" value="1"/>
</dbReference>
<dbReference type="PROSITE" id="PS00432">
    <property type="entry name" value="ACTINS_2"/>
    <property type="match status" value="1"/>
</dbReference>
<dbReference type="PROSITE" id="PS01132">
    <property type="entry name" value="ACTINS_ACT_LIKE"/>
    <property type="match status" value="1"/>
</dbReference>
<comment type="function">
    <text>Actins are highly conserved proteins that are involved in various types of cell motility and are ubiquitously expressed in all eukaryotic cells. Essential component of cell cytoskeleton; plays an important role in cytoplasmic streaming, cell shape determination, cell division, organelle movement and extension growth. This is considered as one of the reproductive actins.</text>
</comment>
<comment type="catalytic activity">
    <reaction evidence="1">
        <text>ATP + H2O = ADP + phosphate + H(+)</text>
        <dbReference type="Rhea" id="RHEA:13065"/>
        <dbReference type="ChEBI" id="CHEBI:15377"/>
        <dbReference type="ChEBI" id="CHEBI:15378"/>
        <dbReference type="ChEBI" id="CHEBI:30616"/>
        <dbReference type="ChEBI" id="CHEBI:43474"/>
        <dbReference type="ChEBI" id="CHEBI:456216"/>
    </reaction>
</comment>
<comment type="subunit">
    <text>Polymerization of globular actin (G-actin) leads to a structural filament (F-actin) in the form of a two-stranded helix. The binding of profilin to monomeric G-actin cause the sequestration of actin into profilactin complexes, and prevents the polymerization.</text>
</comment>
<comment type="subcellular location">
    <subcellularLocation>
        <location>Cytoplasm</location>
        <location>Cytoskeleton</location>
    </subcellularLocation>
</comment>
<comment type="tissue specificity">
    <text>Preferentially expressed in mature pollen, pollen tubes, young embryo sac, and organ primordia. Little or no reproductive-gene expression is detected in vegetative organs, such as root, stems, leaves, sepals and petals.</text>
</comment>
<comment type="miscellaneous">
    <text>There are 8 actin genes in A.thaliana.</text>
</comment>
<comment type="similarity">
    <text evidence="3">Belongs to the actin family.</text>
</comment>
<comment type="sequence caution" evidence="3">
    <conflict type="erroneous gene model prediction">
        <sequence resource="EMBL-CDS" id="CAB88337"/>
    </conflict>
</comment>
<feature type="initiator methionine" description="Removed" evidence="2">
    <location>
        <position position="1"/>
    </location>
</feature>
<feature type="chain" id="PRO_0000403937" description="Actin-3">
    <location>
        <begin position="2"/>
        <end position="377"/>
    </location>
</feature>
<feature type="modified residue" description="N-acetylalanine" evidence="2">
    <location>
        <position position="2"/>
    </location>
</feature>
<reference key="1">
    <citation type="journal article" date="1996" name="Plant Cell">
        <title>Conserved expression of the Arabidopsis ACT1 and ACT3 actin subclass in organ primordia and mature pollen.</title>
        <authorList>
            <person name="An Y.-Q."/>
            <person name="Huang S."/>
            <person name="McDowell J.M."/>
            <person name="McKinney E.C."/>
            <person name="Meagher R.B."/>
        </authorList>
    </citation>
    <scope>NUCLEOTIDE SEQUENCE [GENOMIC DNA]</scope>
    <source>
        <strain>cv. Columbia</strain>
    </source>
</reference>
<reference key="2">
    <citation type="journal article" date="2000" name="Nature">
        <title>Sequence and analysis of chromosome 3 of the plant Arabidopsis thaliana.</title>
        <authorList>
            <person name="Salanoubat M."/>
            <person name="Lemcke K."/>
            <person name="Rieger M."/>
            <person name="Ansorge W."/>
            <person name="Unseld M."/>
            <person name="Fartmann B."/>
            <person name="Valle G."/>
            <person name="Bloecker H."/>
            <person name="Perez-Alonso M."/>
            <person name="Obermaier B."/>
            <person name="Delseny M."/>
            <person name="Boutry M."/>
            <person name="Grivell L.A."/>
            <person name="Mache R."/>
            <person name="Puigdomenech P."/>
            <person name="De Simone V."/>
            <person name="Choisne N."/>
            <person name="Artiguenave F."/>
            <person name="Robert C."/>
            <person name="Brottier P."/>
            <person name="Wincker P."/>
            <person name="Cattolico L."/>
            <person name="Weissenbach J."/>
            <person name="Saurin W."/>
            <person name="Quetier F."/>
            <person name="Schaefer M."/>
            <person name="Mueller-Auer S."/>
            <person name="Gabel C."/>
            <person name="Fuchs M."/>
            <person name="Benes V."/>
            <person name="Wurmbach E."/>
            <person name="Drzonek H."/>
            <person name="Erfle H."/>
            <person name="Jordan N."/>
            <person name="Bangert S."/>
            <person name="Wiedelmann R."/>
            <person name="Kranz H."/>
            <person name="Voss H."/>
            <person name="Holland R."/>
            <person name="Brandt P."/>
            <person name="Nyakatura G."/>
            <person name="Vezzi A."/>
            <person name="D'Angelo M."/>
            <person name="Pallavicini A."/>
            <person name="Toppo S."/>
            <person name="Simionati B."/>
            <person name="Conrad A."/>
            <person name="Hornischer K."/>
            <person name="Kauer G."/>
            <person name="Loehnert T.-H."/>
            <person name="Nordsiek G."/>
            <person name="Reichelt J."/>
            <person name="Scharfe M."/>
            <person name="Schoen O."/>
            <person name="Bargues M."/>
            <person name="Terol J."/>
            <person name="Climent J."/>
            <person name="Navarro P."/>
            <person name="Collado C."/>
            <person name="Perez-Perez A."/>
            <person name="Ottenwaelder B."/>
            <person name="Duchemin D."/>
            <person name="Cooke R."/>
            <person name="Laudie M."/>
            <person name="Berger-Llauro C."/>
            <person name="Purnelle B."/>
            <person name="Masuy D."/>
            <person name="de Haan M."/>
            <person name="Maarse A.C."/>
            <person name="Alcaraz J.-P."/>
            <person name="Cottet A."/>
            <person name="Casacuberta E."/>
            <person name="Monfort A."/>
            <person name="Argiriou A."/>
            <person name="Flores M."/>
            <person name="Liguori R."/>
            <person name="Vitale D."/>
            <person name="Mannhaupt G."/>
            <person name="Haase D."/>
            <person name="Schoof H."/>
            <person name="Rudd S."/>
            <person name="Zaccaria P."/>
            <person name="Mewes H.-W."/>
            <person name="Mayer K.F.X."/>
            <person name="Kaul S."/>
            <person name="Town C.D."/>
            <person name="Koo H.L."/>
            <person name="Tallon L.J."/>
            <person name="Jenkins J."/>
            <person name="Rooney T."/>
            <person name="Rizzo M."/>
            <person name="Walts A."/>
            <person name="Utterback T."/>
            <person name="Fujii C.Y."/>
            <person name="Shea T.P."/>
            <person name="Creasy T.H."/>
            <person name="Haas B."/>
            <person name="Maiti R."/>
            <person name="Wu D."/>
            <person name="Peterson J."/>
            <person name="Van Aken S."/>
            <person name="Pai G."/>
            <person name="Militscher J."/>
            <person name="Sellers P."/>
            <person name="Gill J.E."/>
            <person name="Feldblyum T.V."/>
            <person name="Preuss D."/>
            <person name="Lin X."/>
            <person name="Nierman W.C."/>
            <person name="Salzberg S.L."/>
            <person name="White O."/>
            <person name="Venter J.C."/>
            <person name="Fraser C.M."/>
            <person name="Kaneko T."/>
            <person name="Nakamura Y."/>
            <person name="Sato S."/>
            <person name="Kato T."/>
            <person name="Asamizu E."/>
            <person name="Sasamoto S."/>
            <person name="Kimura T."/>
            <person name="Idesawa K."/>
            <person name="Kawashima K."/>
            <person name="Kishida Y."/>
            <person name="Kiyokawa C."/>
            <person name="Kohara M."/>
            <person name="Matsumoto M."/>
            <person name="Matsuno A."/>
            <person name="Muraki A."/>
            <person name="Nakayama S."/>
            <person name="Nakazaki N."/>
            <person name="Shinpo S."/>
            <person name="Takeuchi C."/>
            <person name="Wada T."/>
            <person name="Watanabe A."/>
            <person name="Yamada M."/>
            <person name="Yasuda M."/>
            <person name="Tabata S."/>
        </authorList>
    </citation>
    <scope>NUCLEOTIDE SEQUENCE [LARGE SCALE GENOMIC DNA]</scope>
    <source>
        <strain>cv. Columbia</strain>
    </source>
</reference>
<reference key="3">
    <citation type="journal article" date="2017" name="Plant J.">
        <title>Araport11: a complete reannotation of the Arabidopsis thaliana reference genome.</title>
        <authorList>
            <person name="Cheng C.Y."/>
            <person name="Krishnakumar V."/>
            <person name="Chan A.P."/>
            <person name="Thibaud-Nissen F."/>
            <person name="Schobel S."/>
            <person name="Town C.D."/>
        </authorList>
    </citation>
    <scope>GENOME REANNOTATION</scope>
    <source>
        <strain>cv. Columbia</strain>
    </source>
</reference>
<reference key="4">
    <citation type="journal article" date="2003" name="Science">
        <title>Empirical analysis of transcriptional activity in the Arabidopsis genome.</title>
        <authorList>
            <person name="Yamada K."/>
            <person name="Lim J."/>
            <person name="Dale J.M."/>
            <person name="Chen H."/>
            <person name="Shinn P."/>
            <person name="Palm C.J."/>
            <person name="Southwick A.M."/>
            <person name="Wu H.C."/>
            <person name="Kim C.J."/>
            <person name="Nguyen M."/>
            <person name="Pham P.K."/>
            <person name="Cheuk R.F."/>
            <person name="Karlin-Newmann G."/>
            <person name="Liu S.X."/>
            <person name="Lam B."/>
            <person name="Sakano H."/>
            <person name="Wu T."/>
            <person name="Yu G."/>
            <person name="Miranda M."/>
            <person name="Quach H.L."/>
            <person name="Tripp M."/>
            <person name="Chang C.H."/>
            <person name="Lee J.M."/>
            <person name="Toriumi M.J."/>
            <person name="Chan M.M."/>
            <person name="Tang C.C."/>
            <person name="Onodera C.S."/>
            <person name="Deng J.M."/>
            <person name="Akiyama K."/>
            <person name="Ansari Y."/>
            <person name="Arakawa T."/>
            <person name="Banh J."/>
            <person name="Banno F."/>
            <person name="Bowser L."/>
            <person name="Brooks S.Y."/>
            <person name="Carninci P."/>
            <person name="Chao Q."/>
            <person name="Choy N."/>
            <person name="Enju A."/>
            <person name="Goldsmith A.D."/>
            <person name="Gurjal M."/>
            <person name="Hansen N.F."/>
            <person name="Hayashizaki Y."/>
            <person name="Johnson-Hopson C."/>
            <person name="Hsuan V.W."/>
            <person name="Iida K."/>
            <person name="Karnes M."/>
            <person name="Khan S."/>
            <person name="Koesema E."/>
            <person name="Ishida J."/>
            <person name="Jiang P.X."/>
            <person name="Jones T."/>
            <person name="Kawai J."/>
            <person name="Kamiya A."/>
            <person name="Meyers C."/>
            <person name="Nakajima M."/>
            <person name="Narusaka M."/>
            <person name="Seki M."/>
            <person name="Sakurai T."/>
            <person name="Satou M."/>
            <person name="Tamse R."/>
            <person name="Vaysberg M."/>
            <person name="Wallender E.K."/>
            <person name="Wong C."/>
            <person name="Yamamura Y."/>
            <person name="Yuan S."/>
            <person name="Shinozaki K."/>
            <person name="Davis R.W."/>
            <person name="Theologis A."/>
            <person name="Ecker J.R."/>
        </authorList>
    </citation>
    <scope>NUCLEOTIDE SEQUENCE [LARGE SCALE MRNA]</scope>
    <source>
        <strain>cv. Columbia</strain>
    </source>
</reference>
<reference key="5">
    <citation type="submission" date="2002-03" db="EMBL/GenBank/DDBJ databases">
        <title>Full-length cDNA from Arabidopsis thaliana.</title>
        <authorList>
            <person name="Brover V.V."/>
            <person name="Troukhan M.E."/>
            <person name="Alexandrov N.A."/>
            <person name="Lu Y.-P."/>
            <person name="Flavell R.B."/>
            <person name="Feldmann K.A."/>
        </authorList>
    </citation>
    <scope>NUCLEOTIDE SEQUENCE [LARGE SCALE MRNA]</scope>
</reference>
<reference key="6">
    <citation type="journal article" date="1996" name="Genetics">
        <title>Structure and evolution of the actin gene family in Arabidopsis thaliana.</title>
        <authorList>
            <person name="McDowell J.M."/>
            <person name="Huang S."/>
            <person name="McKinney E.C."/>
            <person name="An Y.-Q."/>
            <person name="Meagher R.B."/>
        </authorList>
    </citation>
    <scope>GENE FAMILY ORGANIZATION</scope>
    <scope>CHARACTERIZATION</scope>
    <source>
        <strain>cv. Columbia</strain>
    </source>
</reference>
<protein>
    <recommendedName>
        <fullName>Actin-3</fullName>
        <ecNumber evidence="1">3.6.4.-</ecNumber>
    </recommendedName>
</protein>
<sequence>MADGEDIQPLVCDNGTGMVKAGFAGDDAPRAVFPSIVGRPRHTGVMVGMGQKDAYVGDEAQSKRGILTLKYPIEHGIVNNWDDMEKIWHHTFYNELRVAPEEHPILLTEAPLNPKANREKMTQIMFETFNAPAMYVAIQAVLSLYASGRTTGIVLDSGDGVSHTVPIYEGYALPHAILRLDLAGRDLTDALMKILTERGYSFTTTAEREIVRDIKEKLCYIALDYEQELETAKTSSSVEKNYELPDGQVITIGSERFRCPEVLYQPSMIGMENAGIHETTYNSIMKCDVDIRKDLYGNIVLSGGTTMFPGIADRMSKEITALAPSSMKIKVVAPPERKYSVWIGGSILASLSTFQQMWIAKAEYDESGPSIVHRKCF</sequence>
<evidence type="ECO:0000250" key="1">
    <source>
        <dbReference type="UniProtKB" id="P68137"/>
    </source>
</evidence>
<evidence type="ECO:0000250" key="2">
    <source>
        <dbReference type="UniProtKB" id="Q96292"/>
    </source>
</evidence>
<evidence type="ECO:0000305" key="3"/>
<organism>
    <name type="scientific">Arabidopsis thaliana</name>
    <name type="common">Mouse-ear cress</name>
    <dbReference type="NCBI Taxonomy" id="3702"/>
    <lineage>
        <taxon>Eukaryota</taxon>
        <taxon>Viridiplantae</taxon>
        <taxon>Streptophyta</taxon>
        <taxon>Embryophyta</taxon>
        <taxon>Tracheophyta</taxon>
        <taxon>Spermatophyta</taxon>
        <taxon>Magnoliopsida</taxon>
        <taxon>eudicotyledons</taxon>
        <taxon>Gunneridae</taxon>
        <taxon>Pentapetalae</taxon>
        <taxon>rosids</taxon>
        <taxon>malvids</taxon>
        <taxon>Brassicales</taxon>
        <taxon>Brassicaceae</taxon>
        <taxon>Camelineae</taxon>
        <taxon>Arabidopsis</taxon>
    </lineage>
</organism>
<keyword id="KW-0007">Acetylation</keyword>
<keyword id="KW-0067">ATP-binding</keyword>
<keyword id="KW-0963">Cytoplasm</keyword>
<keyword id="KW-0206">Cytoskeleton</keyword>
<keyword id="KW-0378">Hydrolase</keyword>
<keyword id="KW-0547">Nucleotide-binding</keyword>
<keyword id="KW-1185">Reference proteome</keyword>
<name>ACT3_ARATH</name>
<accession>P0CJ47</accession>
<accession>P10671</accession>
<accession>P53493</accession>
<accession>Q9M351</accession>
<proteinExistence type="evidence at protein level"/>